<keyword id="KW-0472">Membrane</keyword>
<keyword id="KW-0496">Mitochondrion</keyword>
<keyword id="KW-1000">Mitochondrion outer membrane</keyword>
<keyword id="KW-0812">Transmembrane</keyword>
<keyword id="KW-1134">Transmembrane beta strand</keyword>
<comment type="function">
    <text evidence="1">Component of the ERMES/MDM complex, which serves as a molecular tether to connect the endoplasmic reticulum and mitochondria. Components of this complex are involved in the control of mitochondrial shape and protein biogenesis and may function in phospholipid exchange. MDM10 is involved in the late assembly steps of the general translocase of the mitochondrial outer membrane (TOM complex). Functions in the TOM40-specific route of the assembly of outer membrane beta-barrel proteins, including the association of TOM40 with the receptor TOM22 and small TOM proteins. Can associate with the SAM(core) complex as well as the MDM12-MMM1 complex, both involved in late steps of the major beta-barrel assembly pathway, that is responsible for biogenesis of all outer membrane beta-barrel proteins. May act as a switch that shuttles between both complexes and channels precursor proteins into the TOM40-specific pathway. Plays a role in mitochondrial morphology and in the inheritance of mitochondria.</text>
</comment>
<comment type="subunit">
    <text evidence="1">Component of the ER-mitochondria encounter structure (ERMES) or MDM complex, composed of MMM1, MDM10, MDM12 and MDM34. Associates with the mitochondrial outer membrane sorting assembly machinery SAM(core) complex.</text>
</comment>
<comment type="subcellular location">
    <subcellularLocation>
        <location evidence="1">Mitochondrion outer membrane</location>
        <topology evidence="1">Multi-pass membrane protein</topology>
    </subcellularLocation>
    <text evidence="1">The ERMES/MDM complex localizes to a few discrete foci (around 10 per single cell), that represent mitochondria-endoplasmic reticulum junctions. These foci are often found next to mtDNA nucleoids.</text>
</comment>
<comment type="domain">
    <text>Lacks alpha-helical transmembrane segments, suggesting that it resides in the membrane via beta-sheet conformations similar to those predicted for other outer membrane proteins and porin.</text>
</comment>
<comment type="similarity">
    <text evidence="1">Belongs to the MDM10 family.</text>
</comment>
<gene>
    <name evidence="1" type="primary">MDM10</name>
    <name type="ORF">CAWG_04237</name>
</gene>
<sequence length="473" mass="53095">MYTYMEYLQKCLYKSTNWNEDNIYSNITATSQALLDFPIPNGFKIDSSSKTTDYSASSFTLSNHHQINGSLAYLYSSIPLTNTMGTKDVSLQDAIAGFRIIEPSVGLRSKLKNNIMSNRSSLLYGRMYFPGSALEAMIIKRLTKNSQLLIKCVNNPHLEKNGTMIVYLQNNTAKYSRELIYSTNEALIGLRCLYNLGDATSHNFTNINPAVIPKFDNSVVSIGTEIWYAARTMSPGLSAALRYSTRSTSTGKPLTMTLAINPIVGHVSSTYTVKTSVASTFCSKYDFNVFSYASNLSLGFELYSYANKKKNSFPSFEHHEIHSSSEENKYLKKHPELQRHHNLHHNLHHQRVPIKSHKYEGNRTIINPIQNLDNVYHINPTLLSSNGSTSTTTNNENTNTSETVTAAFQNLVNESDFSSVFKFSTSLNDKVVKILWEGRLKEFLVSTGVKLSLNPITNTPEFNKLGISFSYAL</sequence>
<reference key="1">
    <citation type="journal article" date="2009" name="Nature">
        <title>Evolution of pathogenicity and sexual reproduction in eight Candida genomes.</title>
        <authorList>
            <person name="Butler G."/>
            <person name="Rasmussen M.D."/>
            <person name="Lin M.F."/>
            <person name="Santos M.A.S."/>
            <person name="Sakthikumar S."/>
            <person name="Munro C.A."/>
            <person name="Rheinbay E."/>
            <person name="Grabherr M."/>
            <person name="Forche A."/>
            <person name="Reedy J.L."/>
            <person name="Agrafioti I."/>
            <person name="Arnaud M.B."/>
            <person name="Bates S."/>
            <person name="Brown A.J.P."/>
            <person name="Brunke S."/>
            <person name="Costanzo M.C."/>
            <person name="Fitzpatrick D.A."/>
            <person name="de Groot P.W.J."/>
            <person name="Harris D."/>
            <person name="Hoyer L.L."/>
            <person name="Hube B."/>
            <person name="Klis F.M."/>
            <person name="Kodira C."/>
            <person name="Lennard N."/>
            <person name="Logue M.E."/>
            <person name="Martin R."/>
            <person name="Neiman A.M."/>
            <person name="Nikolaou E."/>
            <person name="Quail M.A."/>
            <person name="Quinn J."/>
            <person name="Santos M.C."/>
            <person name="Schmitzberger F.F."/>
            <person name="Sherlock G."/>
            <person name="Shah P."/>
            <person name="Silverstein K.A.T."/>
            <person name="Skrzypek M.S."/>
            <person name="Soll D."/>
            <person name="Staggs R."/>
            <person name="Stansfield I."/>
            <person name="Stumpf M.P.H."/>
            <person name="Sudbery P.E."/>
            <person name="Srikantha T."/>
            <person name="Zeng Q."/>
            <person name="Berman J."/>
            <person name="Berriman M."/>
            <person name="Heitman J."/>
            <person name="Gow N.A.R."/>
            <person name="Lorenz M.C."/>
            <person name="Birren B.W."/>
            <person name="Kellis M."/>
            <person name="Cuomo C.A."/>
        </authorList>
    </citation>
    <scope>NUCLEOTIDE SEQUENCE [LARGE SCALE GENOMIC DNA]</scope>
    <source>
        <strain>WO-1</strain>
    </source>
</reference>
<name>MDM10_CANAW</name>
<proteinExistence type="inferred from homology"/>
<evidence type="ECO:0000255" key="1">
    <source>
        <dbReference type="HAMAP-Rule" id="MF_03102"/>
    </source>
</evidence>
<feature type="chain" id="PRO_0000384168" description="Mitochondrial distribution and morphology protein 10">
    <location>
        <begin position="1"/>
        <end position="473"/>
    </location>
</feature>
<organism>
    <name type="scientific">Candida albicans (strain WO-1)</name>
    <name type="common">Yeast</name>
    <dbReference type="NCBI Taxonomy" id="294748"/>
    <lineage>
        <taxon>Eukaryota</taxon>
        <taxon>Fungi</taxon>
        <taxon>Dikarya</taxon>
        <taxon>Ascomycota</taxon>
        <taxon>Saccharomycotina</taxon>
        <taxon>Pichiomycetes</taxon>
        <taxon>Debaryomycetaceae</taxon>
        <taxon>Candida/Lodderomyces clade</taxon>
        <taxon>Candida</taxon>
    </lineage>
</organism>
<protein>
    <recommendedName>
        <fullName evidence="1">Mitochondrial distribution and morphology protein 10</fullName>
    </recommendedName>
    <alternativeName>
        <fullName evidence="1">Mitochondrial inheritance component MDM10</fullName>
    </alternativeName>
</protein>
<accession>C4YIG3</accession>
<dbReference type="EMBL" id="CH672350">
    <property type="protein sequence ID" value="EEQ45898.1"/>
    <property type="molecule type" value="Genomic_DNA"/>
</dbReference>
<dbReference type="SMR" id="C4YIG3"/>
<dbReference type="PaxDb" id="5476-C4YIG3"/>
<dbReference type="VEuPathDB" id="FungiDB:CAWG_04237"/>
<dbReference type="HOGENOM" id="CLU_026505_0_0_1"/>
<dbReference type="OMA" id="VPGYRQI"/>
<dbReference type="OrthoDB" id="15423at766764"/>
<dbReference type="Proteomes" id="UP000001429">
    <property type="component" value="Chromosome 2, Supercontig 1.5"/>
</dbReference>
<dbReference type="GO" id="GO:0032865">
    <property type="term" value="C:ERMES complex"/>
    <property type="evidence" value="ECO:0007669"/>
    <property type="project" value="UniProtKB-UniRule"/>
</dbReference>
<dbReference type="GO" id="GO:0001401">
    <property type="term" value="C:SAM complex"/>
    <property type="evidence" value="ECO:0007669"/>
    <property type="project" value="TreeGrafter"/>
</dbReference>
<dbReference type="GO" id="GO:0051654">
    <property type="term" value="P:establishment of mitochondrion localization"/>
    <property type="evidence" value="ECO:0007669"/>
    <property type="project" value="TreeGrafter"/>
</dbReference>
<dbReference type="GO" id="GO:0000002">
    <property type="term" value="P:mitochondrial genome maintenance"/>
    <property type="evidence" value="ECO:0007669"/>
    <property type="project" value="UniProtKB-UniRule"/>
</dbReference>
<dbReference type="GO" id="GO:0070096">
    <property type="term" value="P:mitochondrial outer membrane translocase complex assembly"/>
    <property type="evidence" value="ECO:0007669"/>
    <property type="project" value="UniProtKB-UniRule"/>
</dbReference>
<dbReference type="GO" id="GO:1990456">
    <property type="term" value="P:mitochondrion-endoplasmic reticulum membrane tethering"/>
    <property type="evidence" value="ECO:0007669"/>
    <property type="project" value="UniProtKB-UniRule"/>
</dbReference>
<dbReference type="GO" id="GO:0015914">
    <property type="term" value="P:phospholipid transport"/>
    <property type="evidence" value="ECO:0007669"/>
    <property type="project" value="TreeGrafter"/>
</dbReference>
<dbReference type="GO" id="GO:0045040">
    <property type="term" value="P:protein insertion into mitochondrial outer membrane"/>
    <property type="evidence" value="ECO:0007669"/>
    <property type="project" value="UniProtKB-UniRule"/>
</dbReference>
<dbReference type="HAMAP" id="MF_03102">
    <property type="entry name" value="Mdm10"/>
    <property type="match status" value="1"/>
</dbReference>
<dbReference type="InterPro" id="IPR027539">
    <property type="entry name" value="Mdm10"/>
</dbReference>
<dbReference type="PANTHER" id="PTHR28035">
    <property type="entry name" value="MITOCHONDRIAL DISTRIBUTION AND MORPHOLOGY PROTEIN 10"/>
    <property type="match status" value="1"/>
</dbReference>
<dbReference type="PANTHER" id="PTHR28035:SF1">
    <property type="entry name" value="MITOCHONDRIAL DISTRIBUTION AND MORPHOLOGY PROTEIN 10"/>
    <property type="match status" value="1"/>
</dbReference>
<dbReference type="Pfam" id="PF12519">
    <property type="entry name" value="MDM10"/>
    <property type="match status" value="1"/>
</dbReference>